<feature type="chain" id="PRO_0000272856" description="Large ribosomal subunit protein uL23">
    <location>
        <begin position="1"/>
        <end position="100"/>
    </location>
</feature>
<organism>
    <name type="scientific">Synechococcus sp. (strain CC9311)</name>
    <dbReference type="NCBI Taxonomy" id="64471"/>
    <lineage>
        <taxon>Bacteria</taxon>
        <taxon>Bacillati</taxon>
        <taxon>Cyanobacteriota</taxon>
        <taxon>Cyanophyceae</taxon>
        <taxon>Synechococcales</taxon>
        <taxon>Synechococcaceae</taxon>
        <taxon>Synechococcus</taxon>
    </lineage>
</organism>
<comment type="function">
    <text evidence="1">One of the early assembly proteins it binds 23S rRNA. One of the proteins that surrounds the polypeptide exit tunnel on the outside of the ribosome. Forms the main docking site for trigger factor binding to the ribosome.</text>
</comment>
<comment type="subunit">
    <text evidence="1">Part of the 50S ribosomal subunit. Contacts protein L29, and trigger factor when it is bound to the ribosome.</text>
</comment>
<comment type="similarity">
    <text evidence="1">Belongs to the universal ribosomal protein uL23 family.</text>
</comment>
<gene>
    <name evidence="1" type="primary">rplW</name>
    <name evidence="1" type="synonym">rpl23</name>
    <name type="ordered locus">sync_0435</name>
</gene>
<dbReference type="EMBL" id="CP000435">
    <property type="protein sequence ID" value="ABI46523.1"/>
    <property type="molecule type" value="Genomic_DNA"/>
</dbReference>
<dbReference type="RefSeq" id="WP_011618397.1">
    <property type="nucleotide sequence ID" value="NC_008319.1"/>
</dbReference>
<dbReference type="SMR" id="Q0ID07"/>
<dbReference type="STRING" id="64471.sync_0435"/>
<dbReference type="KEGG" id="syg:sync_0435"/>
<dbReference type="eggNOG" id="COG0089">
    <property type="taxonomic scope" value="Bacteria"/>
</dbReference>
<dbReference type="HOGENOM" id="CLU_037562_3_2_3"/>
<dbReference type="OrthoDB" id="9793353at2"/>
<dbReference type="Proteomes" id="UP000001961">
    <property type="component" value="Chromosome"/>
</dbReference>
<dbReference type="GO" id="GO:1990904">
    <property type="term" value="C:ribonucleoprotein complex"/>
    <property type="evidence" value="ECO:0007669"/>
    <property type="project" value="UniProtKB-KW"/>
</dbReference>
<dbReference type="GO" id="GO:0005840">
    <property type="term" value="C:ribosome"/>
    <property type="evidence" value="ECO:0007669"/>
    <property type="project" value="UniProtKB-KW"/>
</dbReference>
<dbReference type="GO" id="GO:0019843">
    <property type="term" value="F:rRNA binding"/>
    <property type="evidence" value="ECO:0007669"/>
    <property type="project" value="UniProtKB-UniRule"/>
</dbReference>
<dbReference type="GO" id="GO:0003735">
    <property type="term" value="F:structural constituent of ribosome"/>
    <property type="evidence" value="ECO:0007669"/>
    <property type="project" value="InterPro"/>
</dbReference>
<dbReference type="GO" id="GO:0006412">
    <property type="term" value="P:translation"/>
    <property type="evidence" value="ECO:0007669"/>
    <property type="project" value="UniProtKB-UniRule"/>
</dbReference>
<dbReference type="FunFam" id="3.30.70.330:FF:000001">
    <property type="entry name" value="50S ribosomal protein L23"/>
    <property type="match status" value="1"/>
</dbReference>
<dbReference type="Gene3D" id="3.30.70.330">
    <property type="match status" value="1"/>
</dbReference>
<dbReference type="HAMAP" id="MF_01369_B">
    <property type="entry name" value="Ribosomal_uL23_B"/>
    <property type="match status" value="1"/>
</dbReference>
<dbReference type="InterPro" id="IPR012677">
    <property type="entry name" value="Nucleotide-bd_a/b_plait_sf"/>
</dbReference>
<dbReference type="InterPro" id="IPR013025">
    <property type="entry name" value="Ribosomal_uL23-like"/>
</dbReference>
<dbReference type="InterPro" id="IPR012678">
    <property type="entry name" value="Ribosomal_uL23/eL15/eS24_sf"/>
</dbReference>
<dbReference type="InterPro" id="IPR001014">
    <property type="entry name" value="Ribosomal_uL23_CS"/>
</dbReference>
<dbReference type="NCBIfam" id="NF004359">
    <property type="entry name" value="PRK05738.1-3"/>
    <property type="match status" value="1"/>
</dbReference>
<dbReference type="NCBIfam" id="NF004363">
    <property type="entry name" value="PRK05738.2-4"/>
    <property type="match status" value="1"/>
</dbReference>
<dbReference type="NCBIfam" id="NF004365">
    <property type="entry name" value="PRK05738.3-1"/>
    <property type="match status" value="1"/>
</dbReference>
<dbReference type="NCBIfam" id="NF004366">
    <property type="entry name" value="PRK05738.3-2"/>
    <property type="match status" value="1"/>
</dbReference>
<dbReference type="NCBIfam" id="NF004368">
    <property type="entry name" value="PRK05738.3-4"/>
    <property type="match status" value="1"/>
</dbReference>
<dbReference type="PANTHER" id="PTHR11620">
    <property type="entry name" value="60S RIBOSOMAL PROTEIN L23A"/>
    <property type="match status" value="1"/>
</dbReference>
<dbReference type="Pfam" id="PF00276">
    <property type="entry name" value="Ribosomal_L23"/>
    <property type="match status" value="1"/>
</dbReference>
<dbReference type="SUPFAM" id="SSF54189">
    <property type="entry name" value="Ribosomal proteins S24e, L23 and L15e"/>
    <property type="match status" value="1"/>
</dbReference>
<dbReference type="PROSITE" id="PS00050">
    <property type="entry name" value="RIBOSOMAL_L23"/>
    <property type="match status" value="1"/>
</dbReference>
<protein>
    <recommendedName>
        <fullName evidence="1">Large ribosomal subunit protein uL23</fullName>
    </recommendedName>
    <alternativeName>
        <fullName evidence="2">50S ribosomal protein L23</fullName>
    </alternativeName>
</protein>
<reference key="1">
    <citation type="journal article" date="2006" name="Proc. Natl. Acad. Sci. U.S.A.">
        <title>Genome sequence of Synechococcus CC9311: insights into adaptation to a coastal environment.</title>
        <authorList>
            <person name="Palenik B."/>
            <person name="Ren Q."/>
            <person name="Dupont C.L."/>
            <person name="Myers G.S."/>
            <person name="Heidelberg J.F."/>
            <person name="Badger J.H."/>
            <person name="Madupu R."/>
            <person name="Nelson W.C."/>
            <person name="Brinkac L.M."/>
            <person name="Dodson R.J."/>
            <person name="Durkin A.S."/>
            <person name="Daugherty S.C."/>
            <person name="Sullivan S.A."/>
            <person name="Khouri H."/>
            <person name="Mohamoud Y."/>
            <person name="Halpin R."/>
            <person name="Paulsen I.T."/>
        </authorList>
    </citation>
    <scope>NUCLEOTIDE SEQUENCE [LARGE SCALE GENOMIC DNA]</scope>
    <source>
        <strain>CC9311</strain>
    </source>
</reference>
<evidence type="ECO:0000255" key="1">
    <source>
        <dbReference type="HAMAP-Rule" id="MF_01369"/>
    </source>
</evidence>
<evidence type="ECO:0000305" key="2"/>
<keyword id="KW-1185">Reference proteome</keyword>
<keyword id="KW-0687">Ribonucleoprotein</keyword>
<keyword id="KW-0689">Ribosomal protein</keyword>
<keyword id="KW-0694">RNA-binding</keyword>
<keyword id="KW-0699">rRNA-binding</keyword>
<accession>Q0ID07</accession>
<name>RL23_SYNS3</name>
<sequence length="100" mass="11351">MTERFTGRLADVIRRPLITEKATRALEQNQYTFEVDHRAAKPDIKAAVEQLFDVKVTGISTMNPPRRSRRIGRFAGKRAQVKKAVVRLAEGNSIQLFPES</sequence>
<proteinExistence type="inferred from homology"/>